<accession>Q58026</accession>
<organism>
    <name type="scientific">Methanocaldococcus jannaschii (strain ATCC 43067 / DSM 2661 / JAL-1 / JCM 10045 / NBRC 100440)</name>
    <name type="common">Methanococcus jannaschii</name>
    <dbReference type="NCBI Taxonomy" id="243232"/>
    <lineage>
        <taxon>Archaea</taxon>
        <taxon>Methanobacteriati</taxon>
        <taxon>Methanobacteriota</taxon>
        <taxon>Methanomada group</taxon>
        <taxon>Methanococci</taxon>
        <taxon>Methanococcales</taxon>
        <taxon>Methanocaldococcaceae</taxon>
        <taxon>Methanocaldococcus</taxon>
    </lineage>
</organism>
<gene>
    <name type="ordered locus">MJ0609</name>
</gene>
<proteinExistence type="evidence at protein level"/>
<comment type="subcellular location">
    <subcellularLocation>
        <location evidence="2">Cell membrane</location>
        <topology evidence="2">Multi-pass membrane protein</topology>
    </subcellularLocation>
</comment>
<dbReference type="EMBL" id="L77117">
    <property type="protein sequence ID" value="AAB98602.1"/>
    <property type="molecule type" value="Genomic_DNA"/>
</dbReference>
<dbReference type="PIR" id="A64376">
    <property type="entry name" value="A64376"/>
</dbReference>
<dbReference type="RefSeq" id="WP_010870113.1">
    <property type="nucleotide sequence ID" value="NC_000909.1"/>
</dbReference>
<dbReference type="PDB" id="3GI8">
    <property type="method" value="X-ray"/>
    <property type="resolution" value="2.59 A"/>
    <property type="chains" value="C=1-435"/>
</dbReference>
<dbReference type="PDB" id="3GI9">
    <property type="method" value="X-ray"/>
    <property type="resolution" value="2.48 A"/>
    <property type="chains" value="C=1-435"/>
</dbReference>
<dbReference type="PDB" id="3GIA">
    <property type="method" value="X-ray"/>
    <property type="resolution" value="2.32 A"/>
    <property type="chains" value="A=1-435"/>
</dbReference>
<dbReference type="PDBsum" id="3GI8"/>
<dbReference type="PDBsum" id="3GI9"/>
<dbReference type="PDBsum" id="3GIA"/>
<dbReference type="SMR" id="Q58026"/>
<dbReference type="FunCoup" id="Q58026">
    <property type="interactions" value="20"/>
</dbReference>
<dbReference type="STRING" id="243232.MJ_0609"/>
<dbReference type="TCDB" id="2.A.3.6.3">
    <property type="family name" value="the amino acid-polyamine-organocation (apc) family"/>
</dbReference>
<dbReference type="PaxDb" id="243232-MJ_0609"/>
<dbReference type="ABCD" id="Q58026">
    <property type="antibodies" value="1 sequenced antibody"/>
</dbReference>
<dbReference type="EnsemblBacteria" id="AAB98602">
    <property type="protein sequence ID" value="AAB98602"/>
    <property type="gene ID" value="MJ_0609"/>
</dbReference>
<dbReference type="GeneID" id="1451474"/>
<dbReference type="KEGG" id="mja:MJ_0609"/>
<dbReference type="eggNOG" id="arCOG00009">
    <property type="taxonomic scope" value="Archaea"/>
</dbReference>
<dbReference type="HOGENOM" id="CLU_007946_15_2_2"/>
<dbReference type="InParanoid" id="Q58026"/>
<dbReference type="OrthoDB" id="43026at2157"/>
<dbReference type="PhylomeDB" id="Q58026"/>
<dbReference type="EvolutionaryTrace" id="Q58026"/>
<dbReference type="Proteomes" id="UP000000805">
    <property type="component" value="Chromosome"/>
</dbReference>
<dbReference type="GO" id="GO:0005886">
    <property type="term" value="C:plasma membrane"/>
    <property type="evidence" value="ECO:0007669"/>
    <property type="project" value="UniProtKB-SubCell"/>
</dbReference>
<dbReference type="GO" id="GO:0022857">
    <property type="term" value="F:transmembrane transporter activity"/>
    <property type="evidence" value="ECO:0007669"/>
    <property type="project" value="InterPro"/>
</dbReference>
<dbReference type="Gene3D" id="1.20.1740.10">
    <property type="entry name" value="Amino acid/polyamine transporter I"/>
    <property type="match status" value="1"/>
</dbReference>
<dbReference type="InterPro" id="IPR002293">
    <property type="entry name" value="AA/rel_permease1"/>
</dbReference>
<dbReference type="InterPro" id="IPR050367">
    <property type="entry name" value="APC_superfamily"/>
</dbReference>
<dbReference type="PANTHER" id="PTHR42770">
    <property type="entry name" value="AMINO ACID TRANSPORTER-RELATED"/>
    <property type="match status" value="1"/>
</dbReference>
<dbReference type="PANTHER" id="PTHR42770:SF11">
    <property type="entry name" value="INNER MEMBRANE TRANSPORT PROTEIN YBAT"/>
    <property type="match status" value="1"/>
</dbReference>
<dbReference type="Pfam" id="PF13520">
    <property type="entry name" value="AA_permease_2"/>
    <property type="match status" value="1"/>
</dbReference>
<dbReference type="PIRSF" id="PIRSF006060">
    <property type="entry name" value="AA_transporter"/>
    <property type="match status" value="1"/>
</dbReference>
<reference key="1">
    <citation type="journal article" date="1996" name="Science">
        <title>Complete genome sequence of the methanogenic archaeon, Methanococcus jannaschii.</title>
        <authorList>
            <person name="Bult C.J."/>
            <person name="White O."/>
            <person name="Olsen G.J."/>
            <person name="Zhou L."/>
            <person name="Fleischmann R.D."/>
            <person name="Sutton G.G."/>
            <person name="Blake J.A."/>
            <person name="FitzGerald L.M."/>
            <person name="Clayton R.A."/>
            <person name="Gocayne J.D."/>
            <person name="Kerlavage A.R."/>
            <person name="Dougherty B.A."/>
            <person name="Tomb J.-F."/>
            <person name="Adams M.D."/>
            <person name="Reich C.I."/>
            <person name="Overbeek R."/>
            <person name="Kirkness E.F."/>
            <person name="Weinstock K.G."/>
            <person name="Merrick J.M."/>
            <person name="Glodek A."/>
            <person name="Scott J.L."/>
            <person name="Geoghagen N.S.M."/>
            <person name="Weidman J.F."/>
            <person name="Fuhrmann J.L."/>
            <person name="Nguyen D."/>
            <person name="Utterback T.R."/>
            <person name="Kelley J.M."/>
            <person name="Peterson J.D."/>
            <person name="Sadow P.W."/>
            <person name="Hanna M.C."/>
            <person name="Cotton M.D."/>
            <person name="Roberts K.M."/>
            <person name="Hurst M.A."/>
            <person name="Kaine B.P."/>
            <person name="Borodovsky M."/>
            <person name="Klenk H.-P."/>
            <person name="Fraser C.M."/>
            <person name="Smith H.O."/>
            <person name="Woese C.R."/>
            <person name="Venter J.C."/>
        </authorList>
    </citation>
    <scope>NUCLEOTIDE SEQUENCE [LARGE SCALE GENOMIC DNA]</scope>
    <source>
        <strain>ATCC 43067 / DSM 2661 / JAL-1 / JCM 10045 / NBRC 100440</strain>
    </source>
</reference>
<protein>
    <recommendedName>
        <fullName>Uncharacterized protein MJ0609</fullName>
    </recommendedName>
</protein>
<feature type="chain" id="PRO_0000106956" description="Uncharacterized protein MJ0609">
    <location>
        <begin position="1"/>
        <end position="435"/>
    </location>
</feature>
<feature type="transmembrane region" description="Helical" evidence="1">
    <location>
        <begin position="14"/>
        <end position="34"/>
    </location>
</feature>
<feature type="transmembrane region" description="Helical" evidence="1">
    <location>
        <begin position="44"/>
        <end position="64"/>
    </location>
</feature>
<feature type="transmembrane region" description="Helical" evidence="1">
    <location>
        <begin position="84"/>
        <end position="104"/>
    </location>
</feature>
<feature type="transmembrane region" description="Helical" evidence="1">
    <location>
        <begin position="123"/>
        <end position="143"/>
    </location>
</feature>
<feature type="transmembrane region" description="Helical" evidence="1">
    <location>
        <begin position="153"/>
        <end position="173"/>
    </location>
</feature>
<feature type="transmembrane region" description="Helical" evidence="1">
    <location>
        <begin position="187"/>
        <end position="207"/>
    </location>
</feature>
<feature type="transmembrane region" description="Helical" evidence="1">
    <location>
        <begin position="224"/>
        <end position="244"/>
    </location>
</feature>
<feature type="transmembrane region" description="Helical" evidence="1">
    <location>
        <begin position="267"/>
        <end position="287"/>
    </location>
</feature>
<feature type="transmembrane region" description="Helical" evidence="1">
    <location>
        <begin position="324"/>
        <end position="344"/>
    </location>
</feature>
<feature type="transmembrane region" description="Helical" evidence="1">
    <location>
        <begin position="346"/>
        <end position="366"/>
    </location>
</feature>
<feature type="transmembrane region" description="Helical" evidence="1">
    <location>
        <begin position="375"/>
        <end position="395"/>
    </location>
</feature>
<feature type="transmembrane region" description="Helical" evidence="1">
    <location>
        <begin position="400"/>
        <end position="420"/>
    </location>
</feature>
<feature type="helix" evidence="4">
    <location>
        <begin position="10"/>
        <end position="25"/>
    </location>
</feature>
<feature type="turn" evidence="4">
    <location>
        <begin position="26"/>
        <end position="28"/>
    </location>
</feature>
<feature type="helix" evidence="4">
    <location>
        <begin position="30"/>
        <end position="37"/>
    </location>
</feature>
<feature type="helix" evidence="4">
    <location>
        <begin position="38"/>
        <end position="40"/>
    </location>
</feature>
<feature type="helix" evidence="4">
    <location>
        <begin position="41"/>
        <end position="63"/>
    </location>
</feature>
<feature type="turn" evidence="4">
    <location>
        <begin position="69"/>
        <end position="71"/>
    </location>
</feature>
<feature type="helix" evidence="4">
    <location>
        <begin position="72"/>
        <end position="80"/>
    </location>
</feature>
<feature type="helix" evidence="4">
    <location>
        <begin position="84"/>
        <end position="115"/>
    </location>
</feature>
<feature type="helix" evidence="4">
    <location>
        <begin position="122"/>
        <end position="142"/>
    </location>
</feature>
<feature type="helix" evidence="4">
    <location>
        <begin position="144"/>
        <end position="172"/>
    </location>
</feature>
<feature type="helix" evidence="4">
    <location>
        <begin position="175"/>
        <end position="177"/>
    </location>
</feature>
<feature type="helix" evidence="4">
    <location>
        <begin position="184"/>
        <end position="196"/>
    </location>
</feature>
<feature type="helix" evidence="4">
    <location>
        <begin position="197"/>
        <end position="203"/>
    </location>
</feature>
<feature type="helix" evidence="4">
    <location>
        <begin position="204"/>
        <end position="208"/>
    </location>
</feature>
<feature type="helix" evidence="4">
    <location>
        <begin position="209"/>
        <end position="213"/>
    </location>
</feature>
<feature type="strand" evidence="4">
    <location>
        <begin position="214"/>
        <end position="216"/>
    </location>
</feature>
<feature type="helix" evidence="4">
    <location>
        <begin position="217"/>
        <end position="244"/>
    </location>
</feature>
<feature type="helix" evidence="4">
    <location>
        <begin position="249"/>
        <end position="254"/>
    </location>
</feature>
<feature type="helix" evidence="4">
    <location>
        <begin position="256"/>
        <end position="258"/>
    </location>
</feature>
<feature type="helix" evidence="4">
    <location>
        <begin position="259"/>
        <end position="292"/>
    </location>
</feature>
<feature type="turn" evidence="4">
    <location>
        <begin position="293"/>
        <end position="295"/>
    </location>
</feature>
<feature type="helix" evidence="4">
    <location>
        <begin position="296"/>
        <end position="305"/>
    </location>
</feature>
<feature type="strand" evidence="3">
    <location>
        <begin position="310"/>
        <end position="312"/>
    </location>
</feature>
<feature type="helix" evidence="4">
    <location>
        <begin position="322"/>
        <end position="337"/>
    </location>
</feature>
<feature type="helix" evidence="4">
    <location>
        <begin position="340"/>
        <end position="364"/>
    </location>
</feature>
<feature type="helix" evidence="4">
    <location>
        <begin position="366"/>
        <end position="369"/>
    </location>
</feature>
<feature type="helix" evidence="4">
    <location>
        <begin position="373"/>
        <end position="397"/>
    </location>
</feature>
<feature type="helix" evidence="4">
    <location>
        <begin position="399"/>
        <end position="423"/>
    </location>
</feature>
<feature type="helix" evidence="4">
    <location>
        <begin position="429"/>
        <end position="431"/>
    </location>
</feature>
<feature type="turn" evidence="4">
    <location>
        <begin position="432"/>
        <end position="434"/>
    </location>
</feature>
<keyword id="KW-0002">3D-structure</keyword>
<keyword id="KW-1003">Cell membrane</keyword>
<keyword id="KW-0472">Membrane</keyword>
<keyword id="KW-1185">Reference proteome</keyword>
<keyword id="KW-0812">Transmembrane</keyword>
<keyword id="KW-1133">Transmembrane helix</keyword>
<name>Y609_METJA</name>
<evidence type="ECO:0000255" key="1"/>
<evidence type="ECO:0000305" key="2"/>
<evidence type="ECO:0007829" key="3">
    <source>
        <dbReference type="PDB" id="3GI9"/>
    </source>
</evidence>
<evidence type="ECO:0007829" key="4">
    <source>
        <dbReference type="PDB" id="3GIA"/>
    </source>
</evidence>
<sequence>MELKNKKLSLWEAVSMAVGVMIGASIFSIFGVGAKIAGRNLPETFILSGIYALLVAYSYTKLGAKIVSNAGPIAFIHKAIGDNIITGALSILLWMSYVISIALFAKGFAGYFLPLINAPINTFNIAITEIGIVAFFTALNFFGSKAVGRAEFFIVLVKLLILGLFIFAGLITIHPSYVIPDLAPSAVSGMIFASAIFFLSYMGFGVITNASEHIENPKKNVPRAIFISILIVMFVYVGVAISAIGNLPIDELIKASENALAVAAKPFLGNLGFLLISIGALFSISSAMNATIYGGANVAYSLAKDGELPEFFERKVWFKSTEGLYITSALGVLFALLFNMEGVASITSAVFMVIYLFVILSHYILIDEVGGRKEIVIFSFIVVLGVFLLLLYYQWITNRFVFYGIIATFIGVLIFEIIYRKVTKRTFSNNMYVKS</sequence>